<proteinExistence type="evidence at protein level"/>
<accession>Q9D9N8</accession>
<organism>
    <name type="scientific">Mus musculus</name>
    <name type="common">Mouse</name>
    <dbReference type="NCBI Taxonomy" id="10090"/>
    <lineage>
        <taxon>Eukaryota</taxon>
        <taxon>Metazoa</taxon>
        <taxon>Chordata</taxon>
        <taxon>Craniata</taxon>
        <taxon>Vertebrata</taxon>
        <taxon>Euteleostomi</taxon>
        <taxon>Mammalia</taxon>
        <taxon>Eutheria</taxon>
        <taxon>Euarchontoglires</taxon>
        <taxon>Glires</taxon>
        <taxon>Rodentia</taxon>
        <taxon>Myomorpha</taxon>
        <taxon>Muroidea</taxon>
        <taxon>Muridae</taxon>
        <taxon>Murinae</taxon>
        <taxon>Mus</taxon>
        <taxon>Mus</taxon>
    </lineage>
</organism>
<protein>
    <recommendedName>
        <fullName evidence="6">Protease-associated domain-containing protein 1</fullName>
    </recommendedName>
    <alternativeName>
        <fullName>Protease-associated domain-containing protein of 21 kDa</fullName>
    </alternativeName>
</protein>
<evidence type="ECO:0000250" key="1"/>
<evidence type="ECO:0000250" key="2">
    <source>
        <dbReference type="UniProtKB" id="Q9BSG0"/>
    </source>
</evidence>
<evidence type="ECO:0000255" key="3"/>
<evidence type="ECO:0000269" key="4">
    <source>
    </source>
</evidence>
<evidence type="ECO:0000303" key="5">
    <source>
    </source>
</evidence>
<evidence type="ECO:0000305" key="6"/>
<evidence type="ECO:0000312" key="7">
    <source>
        <dbReference type="MGI" id="MGI:1920577"/>
    </source>
</evidence>
<comment type="function">
    <text evidence="4">Plays a role in the modulation of physical activity and adiposity.</text>
</comment>
<comment type="subcellular location">
    <subcellularLocation>
        <location evidence="2">Secreted</location>
    </subcellularLocation>
</comment>
<comment type="tissue specificity">
    <text evidence="4">Expressed in metabolically active tissues such as liver, muscle, adipose, and heart and different brain regions like cortex and hypothalamus, expression is acutely regulated by the nutritional state.</text>
</comment>
<comment type="induction">
    <text evidence="4">Expression in metabolically active tissues is significantly suppressed by refeeding.</text>
</comment>
<comment type="PTM">
    <text evidence="2">N-glycosylated; required for efficient secretion.</text>
</comment>
<comment type="disruption phenotype">
    <text evidence="4">Mutants born at the expected Mendelian ratio, and they appear normal with no gross developmental abnormalities (PubMed:31689374). Knockout female mice fed with high fat diet have reduced weight gain by elevating physical activity and energy expenditure (PubMed:31689374).</text>
</comment>
<name>PADC1_MOUSE</name>
<keyword id="KW-0325">Glycoprotein</keyword>
<keyword id="KW-1185">Reference proteome</keyword>
<keyword id="KW-0964">Secreted</keyword>
<keyword id="KW-0732">Signal</keyword>
<feature type="signal peptide" evidence="3">
    <location>
        <begin position="1"/>
        <end position="21"/>
    </location>
</feature>
<feature type="chain" id="PRO_0000022002" description="Protease-associated domain-containing protein 1">
    <location>
        <begin position="22"/>
        <end position="188"/>
    </location>
</feature>
<feature type="domain" description="PA">
    <location>
        <begin position="83"/>
        <end position="163"/>
    </location>
</feature>
<feature type="glycosylation site" description="N-linked (GlcNAc...) asparagine" evidence="3">
    <location>
        <position position="121"/>
    </location>
</feature>
<feature type="glycosylation site" description="N-linked (GlcNAc...) asparagine" evidence="1">
    <location>
        <position position="171"/>
    </location>
</feature>
<dbReference type="EMBL" id="AK006658">
    <property type="protein sequence ID" value="BAB24693.1"/>
    <property type="molecule type" value="mRNA"/>
</dbReference>
<dbReference type="CCDS" id="CCDS51828.1"/>
<dbReference type="RefSeq" id="NP_001156899.1">
    <property type="nucleotide sequence ID" value="NM_001163427.1"/>
</dbReference>
<dbReference type="RefSeq" id="NP_082781.1">
    <property type="nucleotide sequence ID" value="NM_028505.2"/>
</dbReference>
<dbReference type="RefSeq" id="XP_011239788.1">
    <property type="nucleotide sequence ID" value="XM_011241486.2"/>
</dbReference>
<dbReference type="SMR" id="Q9D9N8"/>
<dbReference type="FunCoup" id="Q9D9N8">
    <property type="interactions" value="139"/>
</dbReference>
<dbReference type="STRING" id="10090.ENSMUSP00000032080"/>
<dbReference type="GlyCosmos" id="Q9D9N8">
    <property type="glycosylation" value="2 sites, No reported glycans"/>
</dbReference>
<dbReference type="GlyGen" id="Q9D9N8">
    <property type="glycosylation" value="2 sites"/>
</dbReference>
<dbReference type="PhosphoSitePlus" id="Q9D9N8"/>
<dbReference type="PaxDb" id="10090-ENSMUSP00000032080"/>
<dbReference type="ProteomicsDB" id="287934"/>
<dbReference type="Antibodypedia" id="31326">
    <property type="antibodies" value="13 antibodies from 7 providers"/>
</dbReference>
<dbReference type="Ensembl" id="ENSMUST00000032080.9">
    <property type="protein sequence ID" value="ENSMUSP00000032080.3"/>
    <property type="gene ID" value="ENSMUSG00000030008.10"/>
</dbReference>
<dbReference type="GeneID" id="73327"/>
<dbReference type="KEGG" id="mmu:73327"/>
<dbReference type="UCSC" id="uc009cps.2">
    <property type="organism name" value="mouse"/>
</dbReference>
<dbReference type="AGR" id="MGI:1920577"/>
<dbReference type="CTD" id="84279"/>
<dbReference type="MGI" id="MGI:1920577">
    <property type="gene designation" value="Pradc1"/>
</dbReference>
<dbReference type="VEuPathDB" id="HostDB:ENSMUSG00000030008"/>
<dbReference type="eggNOG" id="KOG3920">
    <property type="taxonomic scope" value="Eukaryota"/>
</dbReference>
<dbReference type="GeneTree" id="ENSGT00390000009837"/>
<dbReference type="HOGENOM" id="CLU_084006_2_0_1"/>
<dbReference type="InParanoid" id="Q9D9N8"/>
<dbReference type="OMA" id="ELMQPPW"/>
<dbReference type="OrthoDB" id="206201at2759"/>
<dbReference type="PhylomeDB" id="Q9D9N8"/>
<dbReference type="TreeFam" id="TF335463"/>
<dbReference type="BioGRID-ORCS" id="73327">
    <property type="hits" value="2 hits in 77 CRISPR screens"/>
</dbReference>
<dbReference type="PRO" id="PR:Q9D9N8"/>
<dbReference type="Proteomes" id="UP000000589">
    <property type="component" value="Chromosome 6"/>
</dbReference>
<dbReference type="RNAct" id="Q9D9N8">
    <property type="molecule type" value="protein"/>
</dbReference>
<dbReference type="Bgee" id="ENSMUSG00000030008">
    <property type="expression patterns" value="Expressed in primary oocyte and 252 other cell types or tissues"/>
</dbReference>
<dbReference type="ExpressionAtlas" id="Q9D9N8">
    <property type="expression patterns" value="baseline and differential"/>
</dbReference>
<dbReference type="GO" id="GO:0005576">
    <property type="term" value="C:extracellular region"/>
    <property type="evidence" value="ECO:0000250"/>
    <property type="project" value="UniProtKB"/>
</dbReference>
<dbReference type="CDD" id="cd02127">
    <property type="entry name" value="PA_hPAP21_like"/>
    <property type="match status" value="1"/>
</dbReference>
<dbReference type="FunFam" id="3.50.30.30:FF:000017">
    <property type="entry name" value="Protease-associated domain-containing protein 1"/>
    <property type="match status" value="1"/>
</dbReference>
<dbReference type="Gene3D" id="3.50.30.30">
    <property type="match status" value="1"/>
</dbReference>
<dbReference type="InterPro" id="IPR046450">
    <property type="entry name" value="PA_dom_sf"/>
</dbReference>
<dbReference type="InterPro" id="IPR003137">
    <property type="entry name" value="PA_domain"/>
</dbReference>
<dbReference type="InterPro" id="IPR037323">
    <property type="entry name" value="PRADC1-like_PA"/>
</dbReference>
<dbReference type="PANTHER" id="PTHR22702">
    <property type="entry name" value="PROTEASE-ASSOCIATED DOMAIN-CONTAINING PROTEIN"/>
    <property type="match status" value="1"/>
</dbReference>
<dbReference type="PANTHER" id="PTHR22702:SF1">
    <property type="entry name" value="PROTEASE-ASSOCIATED DOMAIN-CONTAINING PROTEIN 1"/>
    <property type="match status" value="1"/>
</dbReference>
<dbReference type="Pfam" id="PF02225">
    <property type="entry name" value="PA"/>
    <property type="match status" value="1"/>
</dbReference>
<dbReference type="SUPFAM" id="SSF52025">
    <property type="entry name" value="PA domain"/>
    <property type="match status" value="1"/>
</dbReference>
<gene>
    <name evidence="7" type="primary">Pradc1</name>
    <name evidence="5" type="synonym">Pap21</name>
</gene>
<reference key="1">
    <citation type="journal article" date="2005" name="Science">
        <title>The transcriptional landscape of the mammalian genome.</title>
        <authorList>
            <person name="Carninci P."/>
            <person name="Kasukawa T."/>
            <person name="Katayama S."/>
            <person name="Gough J."/>
            <person name="Frith M.C."/>
            <person name="Maeda N."/>
            <person name="Oyama R."/>
            <person name="Ravasi T."/>
            <person name="Lenhard B."/>
            <person name="Wells C."/>
            <person name="Kodzius R."/>
            <person name="Shimokawa K."/>
            <person name="Bajic V.B."/>
            <person name="Brenner S.E."/>
            <person name="Batalov S."/>
            <person name="Forrest A.R."/>
            <person name="Zavolan M."/>
            <person name="Davis M.J."/>
            <person name="Wilming L.G."/>
            <person name="Aidinis V."/>
            <person name="Allen J.E."/>
            <person name="Ambesi-Impiombato A."/>
            <person name="Apweiler R."/>
            <person name="Aturaliya R.N."/>
            <person name="Bailey T.L."/>
            <person name="Bansal M."/>
            <person name="Baxter L."/>
            <person name="Beisel K.W."/>
            <person name="Bersano T."/>
            <person name="Bono H."/>
            <person name="Chalk A.M."/>
            <person name="Chiu K.P."/>
            <person name="Choudhary V."/>
            <person name="Christoffels A."/>
            <person name="Clutterbuck D.R."/>
            <person name="Crowe M.L."/>
            <person name="Dalla E."/>
            <person name="Dalrymple B.P."/>
            <person name="de Bono B."/>
            <person name="Della Gatta G."/>
            <person name="di Bernardo D."/>
            <person name="Down T."/>
            <person name="Engstrom P."/>
            <person name="Fagiolini M."/>
            <person name="Faulkner G."/>
            <person name="Fletcher C.F."/>
            <person name="Fukushima T."/>
            <person name="Furuno M."/>
            <person name="Futaki S."/>
            <person name="Gariboldi M."/>
            <person name="Georgii-Hemming P."/>
            <person name="Gingeras T.R."/>
            <person name="Gojobori T."/>
            <person name="Green R.E."/>
            <person name="Gustincich S."/>
            <person name="Harbers M."/>
            <person name="Hayashi Y."/>
            <person name="Hensch T.K."/>
            <person name="Hirokawa N."/>
            <person name="Hill D."/>
            <person name="Huminiecki L."/>
            <person name="Iacono M."/>
            <person name="Ikeo K."/>
            <person name="Iwama A."/>
            <person name="Ishikawa T."/>
            <person name="Jakt M."/>
            <person name="Kanapin A."/>
            <person name="Katoh M."/>
            <person name="Kawasawa Y."/>
            <person name="Kelso J."/>
            <person name="Kitamura H."/>
            <person name="Kitano H."/>
            <person name="Kollias G."/>
            <person name="Krishnan S.P."/>
            <person name="Kruger A."/>
            <person name="Kummerfeld S.K."/>
            <person name="Kurochkin I.V."/>
            <person name="Lareau L.F."/>
            <person name="Lazarevic D."/>
            <person name="Lipovich L."/>
            <person name="Liu J."/>
            <person name="Liuni S."/>
            <person name="McWilliam S."/>
            <person name="Madan Babu M."/>
            <person name="Madera M."/>
            <person name="Marchionni L."/>
            <person name="Matsuda H."/>
            <person name="Matsuzawa S."/>
            <person name="Miki H."/>
            <person name="Mignone F."/>
            <person name="Miyake S."/>
            <person name="Morris K."/>
            <person name="Mottagui-Tabar S."/>
            <person name="Mulder N."/>
            <person name="Nakano N."/>
            <person name="Nakauchi H."/>
            <person name="Ng P."/>
            <person name="Nilsson R."/>
            <person name="Nishiguchi S."/>
            <person name="Nishikawa S."/>
            <person name="Nori F."/>
            <person name="Ohara O."/>
            <person name="Okazaki Y."/>
            <person name="Orlando V."/>
            <person name="Pang K.C."/>
            <person name="Pavan W.J."/>
            <person name="Pavesi G."/>
            <person name="Pesole G."/>
            <person name="Petrovsky N."/>
            <person name="Piazza S."/>
            <person name="Reed J."/>
            <person name="Reid J.F."/>
            <person name="Ring B.Z."/>
            <person name="Ringwald M."/>
            <person name="Rost B."/>
            <person name="Ruan Y."/>
            <person name="Salzberg S.L."/>
            <person name="Sandelin A."/>
            <person name="Schneider C."/>
            <person name="Schoenbach C."/>
            <person name="Sekiguchi K."/>
            <person name="Semple C.A."/>
            <person name="Seno S."/>
            <person name="Sessa L."/>
            <person name="Sheng Y."/>
            <person name="Shibata Y."/>
            <person name="Shimada H."/>
            <person name="Shimada K."/>
            <person name="Silva D."/>
            <person name="Sinclair B."/>
            <person name="Sperling S."/>
            <person name="Stupka E."/>
            <person name="Sugiura K."/>
            <person name="Sultana R."/>
            <person name="Takenaka Y."/>
            <person name="Taki K."/>
            <person name="Tammoja K."/>
            <person name="Tan S.L."/>
            <person name="Tang S."/>
            <person name="Taylor M.S."/>
            <person name="Tegner J."/>
            <person name="Teichmann S.A."/>
            <person name="Ueda H.R."/>
            <person name="van Nimwegen E."/>
            <person name="Verardo R."/>
            <person name="Wei C.L."/>
            <person name="Yagi K."/>
            <person name="Yamanishi H."/>
            <person name="Zabarovsky E."/>
            <person name="Zhu S."/>
            <person name="Zimmer A."/>
            <person name="Hide W."/>
            <person name="Bult C."/>
            <person name="Grimmond S.M."/>
            <person name="Teasdale R.D."/>
            <person name="Liu E.T."/>
            <person name="Brusic V."/>
            <person name="Quackenbush J."/>
            <person name="Wahlestedt C."/>
            <person name="Mattick J.S."/>
            <person name="Hume D.A."/>
            <person name="Kai C."/>
            <person name="Sasaki D."/>
            <person name="Tomaru Y."/>
            <person name="Fukuda S."/>
            <person name="Kanamori-Katayama M."/>
            <person name="Suzuki M."/>
            <person name="Aoki J."/>
            <person name="Arakawa T."/>
            <person name="Iida J."/>
            <person name="Imamura K."/>
            <person name="Itoh M."/>
            <person name="Kato T."/>
            <person name="Kawaji H."/>
            <person name="Kawagashira N."/>
            <person name="Kawashima T."/>
            <person name="Kojima M."/>
            <person name="Kondo S."/>
            <person name="Konno H."/>
            <person name="Nakano K."/>
            <person name="Ninomiya N."/>
            <person name="Nishio T."/>
            <person name="Okada M."/>
            <person name="Plessy C."/>
            <person name="Shibata K."/>
            <person name="Shiraki T."/>
            <person name="Suzuki S."/>
            <person name="Tagami M."/>
            <person name="Waki K."/>
            <person name="Watahiki A."/>
            <person name="Okamura-Oho Y."/>
            <person name="Suzuki H."/>
            <person name="Kawai J."/>
            <person name="Hayashizaki Y."/>
        </authorList>
    </citation>
    <scope>NUCLEOTIDE SEQUENCE [LARGE SCALE MRNA]</scope>
    <source>
        <strain>C57BL/6J</strain>
        <tissue>Testis</tissue>
    </source>
</reference>
<reference key="2">
    <citation type="journal article" date="2010" name="Cell">
        <title>A tissue-specific atlas of mouse protein phosphorylation and expression.</title>
        <authorList>
            <person name="Huttlin E.L."/>
            <person name="Jedrychowski M.P."/>
            <person name="Elias J.E."/>
            <person name="Goswami T."/>
            <person name="Rad R."/>
            <person name="Beausoleil S.A."/>
            <person name="Villen J."/>
            <person name="Haas W."/>
            <person name="Sowa M.E."/>
            <person name="Gygi S.P."/>
        </authorList>
    </citation>
    <scope>IDENTIFICATION BY MASS SPECTROMETRY [LARGE SCALE ANALYSIS]</scope>
    <source>
        <tissue>Testis</tissue>
    </source>
</reference>
<reference key="3">
    <citation type="journal article" date="2019" name="FASEB J.">
        <title>PRADC1: a novel metabolic-responsive secretory protein that modulates physical activity and adiposity.</title>
        <authorList>
            <person name="Rodriguez S."/>
            <person name="Stewart A.N."/>
            <person name="Lei X."/>
            <person name="Cao X."/>
            <person name="Little H.C."/>
            <person name="Fong V."/>
            <person name="Sarver D.C."/>
            <person name="Wong G.W."/>
        </authorList>
    </citation>
    <scope>FUNCTION</scope>
    <scope>TISSUE SPECIFICITY</scope>
    <scope>DISRUPTION PHENOTYPE</scope>
    <scope>INDUCTION BY FEEDING</scope>
</reference>
<sequence>MSRGAAGWCCLVLWLPTCVAAHGLRIHDYLYFQVLSPGDIRYIFTATPAKDFGGIFHTRYEQIHLVPAEPPEACGELSNGFFIQDQIALVERGGCSFLSKTRVVQEHGGRAVIISDNAVDNDSFYVEMIQDSTQRTADIPALFLLGRDGYMIRRSLEQHGLPWAIISIPVNVTSIPTFELLQPPWTFW</sequence>